<keyword id="KW-0007">Acetylation</keyword>
<keyword id="KW-0049">Antioxidant</keyword>
<keyword id="KW-0963">Cytoplasm</keyword>
<keyword id="KW-0903">Direct protein sequencing</keyword>
<keyword id="KW-0378">Hydrolase</keyword>
<keyword id="KW-0442">Lipid degradation</keyword>
<keyword id="KW-0443">Lipid metabolism</keyword>
<keyword id="KW-0458">Lysosome</keyword>
<keyword id="KW-0511">Multifunctional enzyme</keyword>
<keyword id="KW-0560">Oxidoreductase</keyword>
<keyword id="KW-0575">Peroxidase</keyword>
<keyword id="KW-0597">Phosphoprotein</keyword>
<keyword id="KW-0676">Redox-active center</keyword>
<keyword id="KW-1185">Reference proteome</keyword>
<keyword id="KW-0808">Transferase</keyword>
<gene>
    <name type="primary">Prdx6</name>
    <name type="synonym">Aop2</name>
    <name type="synonym">Ltw4</name>
    <name type="synonym">Prdx5</name>
</gene>
<dbReference type="EC" id="1.11.1.27" evidence="3"/>
<dbReference type="EC" id="3.1.1.4" evidence="6"/>
<dbReference type="EC" id="2.3.1.23" evidence="6"/>
<dbReference type="EMBL" id="AF004670">
    <property type="protein sequence ID" value="AAC53277.1"/>
    <property type="molecule type" value="mRNA"/>
</dbReference>
<dbReference type="EMBL" id="Y12883">
    <property type="protein sequence ID" value="CAA73383.1"/>
    <property type="molecule type" value="mRNA"/>
</dbReference>
<dbReference type="EMBL" id="AF093852">
    <property type="protein sequence ID" value="AAC63376.1"/>
    <property type="molecule type" value="mRNA"/>
</dbReference>
<dbReference type="EMBL" id="AF093853">
    <property type="protein sequence ID" value="AAC67553.1"/>
    <property type="molecule type" value="Genomic_DNA"/>
</dbReference>
<dbReference type="EMBL" id="AF093857">
    <property type="protein sequence ID" value="AAD03716.1"/>
    <property type="molecule type" value="Genomic_DNA"/>
</dbReference>
<dbReference type="EMBL" id="AF093854">
    <property type="protein sequence ID" value="AAD03716.1"/>
    <property type="status" value="JOINED"/>
    <property type="molecule type" value="Genomic_DNA"/>
</dbReference>
<dbReference type="EMBL" id="AF093855">
    <property type="protein sequence ID" value="AAD03716.1"/>
    <property type="status" value="JOINED"/>
    <property type="molecule type" value="Genomic_DNA"/>
</dbReference>
<dbReference type="EMBL" id="AF093856">
    <property type="protein sequence ID" value="AAD03716.1"/>
    <property type="status" value="JOINED"/>
    <property type="molecule type" value="Genomic_DNA"/>
</dbReference>
<dbReference type="EMBL" id="AK030413">
    <property type="protein sequence ID" value="BAC26952.1"/>
    <property type="molecule type" value="mRNA"/>
</dbReference>
<dbReference type="EMBL" id="BC013489">
    <property type="protein sequence ID" value="AAH13489.1"/>
    <property type="molecule type" value="mRNA"/>
</dbReference>
<dbReference type="CCDS" id="CCDS15415.1"/>
<dbReference type="RefSeq" id="NP_031479.1">
    <property type="nucleotide sequence ID" value="NM_007453.4"/>
</dbReference>
<dbReference type="SMR" id="O08709"/>
<dbReference type="BioGRID" id="198118">
    <property type="interactions" value="27"/>
</dbReference>
<dbReference type="FunCoup" id="O08709">
    <property type="interactions" value="1566"/>
</dbReference>
<dbReference type="IntAct" id="O08709">
    <property type="interactions" value="10"/>
</dbReference>
<dbReference type="MINT" id="O08709"/>
<dbReference type="STRING" id="10090.ENSMUSP00000071636"/>
<dbReference type="GlyGen" id="O08709">
    <property type="glycosylation" value="4 sites, 1 N-linked glycan (1 site), 1 O-linked glycan (3 sites)"/>
</dbReference>
<dbReference type="iPTMnet" id="O08709"/>
<dbReference type="PhosphoSitePlus" id="O08709"/>
<dbReference type="SwissPalm" id="O08709"/>
<dbReference type="REPRODUCTION-2DPAGE" id="O08709"/>
<dbReference type="CPTAC" id="non-CPTAC-3603"/>
<dbReference type="jPOST" id="O08709"/>
<dbReference type="PaxDb" id="10090-ENSMUSP00000071636"/>
<dbReference type="PeptideAtlas" id="O08709"/>
<dbReference type="ProteomicsDB" id="291649"/>
<dbReference type="Pumba" id="O08709"/>
<dbReference type="TopDownProteomics" id="O08709"/>
<dbReference type="DNASU" id="11758"/>
<dbReference type="GeneID" id="11758"/>
<dbReference type="KEGG" id="mmu:11758"/>
<dbReference type="AGR" id="MGI:894320"/>
<dbReference type="CTD" id="9588"/>
<dbReference type="MGI" id="MGI:894320">
    <property type="gene designation" value="Prdx6"/>
</dbReference>
<dbReference type="eggNOG" id="KOG0854">
    <property type="taxonomic scope" value="Eukaryota"/>
</dbReference>
<dbReference type="InParanoid" id="O08709"/>
<dbReference type="OrthoDB" id="2996783at2759"/>
<dbReference type="BRENDA" id="1.11.1.27">
    <property type="organism ID" value="3474"/>
</dbReference>
<dbReference type="BRENDA" id="2.3.1.23">
    <property type="organism ID" value="3474"/>
</dbReference>
<dbReference type="BRENDA" id="3.1.1.4">
    <property type="organism ID" value="3474"/>
</dbReference>
<dbReference type="Reactome" id="R-MMU-3299685">
    <property type="pathway name" value="Detoxification of Reactive Oxygen Species"/>
</dbReference>
<dbReference type="Reactome" id="R-MMU-6798695">
    <property type="pathway name" value="Neutrophil degranulation"/>
</dbReference>
<dbReference type="BioGRID-ORCS" id="11758">
    <property type="hits" value="4 hits in 80 CRISPR screens"/>
</dbReference>
<dbReference type="ChiTaRS" id="Prdx6">
    <property type="organism name" value="mouse"/>
</dbReference>
<dbReference type="PRO" id="PR:O08709"/>
<dbReference type="Proteomes" id="UP000000589">
    <property type="component" value="Unplaced"/>
</dbReference>
<dbReference type="RNAct" id="O08709">
    <property type="molecule type" value="protein"/>
</dbReference>
<dbReference type="GO" id="GO:0005829">
    <property type="term" value="C:cytosol"/>
    <property type="evidence" value="ECO:0000314"/>
    <property type="project" value="MGI"/>
</dbReference>
<dbReference type="GO" id="GO:0005764">
    <property type="term" value="C:lysosome"/>
    <property type="evidence" value="ECO:0007669"/>
    <property type="project" value="UniProtKB-SubCell"/>
</dbReference>
<dbReference type="GO" id="GO:0005739">
    <property type="term" value="C:mitochondrion"/>
    <property type="evidence" value="ECO:0007005"/>
    <property type="project" value="MGI"/>
</dbReference>
<dbReference type="GO" id="GO:0047184">
    <property type="term" value="F:1-acylglycerophosphocholine O-acyltransferase activity"/>
    <property type="evidence" value="ECO:0000315"/>
    <property type="project" value="UniProtKB"/>
</dbReference>
<dbReference type="GO" id="GO:0004601">
    <property type="term" value="F:peroxidase activity"/>
    <property type="evidence" value="ECO:0000315"/>
    <property type="project" value="MGI"/>
</dbReference>
<dbReference type="GO" id="GO:0051920">
    <property type="term" value="F:peroxiredoxin activity"/>
    <property type="evidence" value="ECO:0007669"/>
    <property type="project" value="InterPro"/>
</dbReference>
<dbReference type="GO" id="GO:0004623">
    <property type="term" value="F:phospholipase A2 activity"/>
    <property type="evidence" value="ECO:0000315"/>
    <property type="project" value="UniProtKB"/>
</dbReference>
<dbReference type="GO" id="GO:0032060">
    <property type="term" value="P:bleb assembly"/>
    <property type="evidence" value="ECO:0000315"/>
    <property type="project" value="MGI"/>
</dbReference>
<dbReference type="GO" id="GO:0016042">
    <property type="term" value="P:lipid catabolic process"/>
    <property type="evidence" value="ECO:0007669"/>
    <property type="project" value="UniProtKB-KW"/>
</dbReference>
<dbReference type="GO" id="GO:0000302">
    <property type="term" value="P:response to reactive oxygen species"/>
    <property type="evidence" value="ECO:0000315"/>
    <property type="project" value="MGI"/>
</dbReference>
<dbReference type="CDD" id="cd03016">
    <property type="entry name" value="PRX_1cys"/>
    <property type="match status" value="1"/>
</dbReference>
<dbReference type="FunFam" id="3.30.1020.10:FF:000001">
    <property type="entry name" value="1-Cys peroxiredoxin"/>
    <property type="match status" value="1"/>
</dbReference>
<dbReference type="FunFam" id="3.40.30.10:FF:000011">
    <property type="entry name" value="Peroxiredoxin PRX1"/>
    <property type="match status" value="1"/>
</dbReference>
<dbReference type="Gene3D" id="3.30.1020.10">
    <property type="entry name" value="Antioxidant, Horf6, Chain A, domain2"/>
    <property type="match status" value="1"/>
</dbReference>
<dbReference type="Gene3D" id="3.40.30.10">
    <property type="entry name" value="Glutaredoxin"/>
    <property type="match status" value="1"/>
</dbReference>
<dbReference type="InterPro" id="IPR000866">
    <property type="entry name" value="AhpC/TSA"/>
</dbReference>
<dbReference type="InterPro" id="IPR024706">
    <property type="entry name" value="Peroxiredoxin_AhpC-typ"/>
</dbReference>
<dbReference type="InterPro" id="IPR019479">
    <property type="entry name" value="Peroxiredoxin_C"/>
</dbReference>
<dbReference type="InterPro" id="IPR045020">
    <property type="entry name" value="PRX_1cys"/>
</dbReference>
<dbReference type="InterPro" id="IPR036249">
    <property type="entry name" value="Thioredoxin-like_sf"/>
</dbReference>
<dbReference type="InterPro" id="IPR013766">
    <property type="entry name" value="Thioredoxin_domain"/>
</dbReference>
<dbReference type="PANTHER" id="PTHR43503">
    <property type="entry name" value="MCG48959-RELATED"/>
    <property type="match status" value="1"/>
</dbReference>
<dbReference type="PANTHER" id="PTHR43503:SF4">
    <property type="entry name" value="PEROXIREDOXIN-6"/>
    <property type="match status" value="1"/>
</dbReference>
<dbReference type="Pfam" id="PF10417">
    <property type="entry name" value="1-cysPrx_C"/>
    <property type="match status" value="1"/>
</dbReference>
<dbReference type="Pfam" id="PF00578">
    <property type="entry name" value="AhpC-TSA"/>
    <property type="match status" value="1"/>
</dbReference>
<dbReference type="PIRSF" id="PIRSF000239">
    <property type="entry name" value="AHPC"/>
    <property type="match status" value="1"/>
</dbReference>
<dbReference type="SUPFAM" id="SSF52833">
    <property type="entry name" value="Thioredoxin-like"/>
    <property type="match status" value="1"/>
</dbReference>
<dbReference type="PROSITE" id="PS51352">
    <property type="entry name" value="THIOREDOXIN_2"/>
    <property type="match status" value="1"/>
</dbReference>
<proteinExistence type="evidence at protein level"/>
<name>PRDX6_MOUSE</name>
<evidence type="ECO:0000250" key="1">
    <source>
        <dbReference type="UniProtKB" id="O35244"/>
    </source>
</evidence>
<evidence type="ECO:0000250" key="2">
    <source>
        <dbReference type="UniProtKB" id="O77834"/>
    </source>
</evidence>
<evidence type="ECO:0000250" key="3">
    <source>
        <dbReference type="UniProtKB" id="P30041"/>
    </source>
</evidence>
<evidence type="ECO:0000255" key="4">
    <source>
        <dbReference type="PROSITE-ProRule" id="PRU00691"/>
    </source>
</evidence>
<evidence type="ECO:0000269" key="5">
    <source>
    </source>
</evidence>
<evidence type="ECO:0000269" key="6">
    <source>
    </source>
</evidence>
<evidence type="ECO:0000269" key="7">
    <source>
    </source>
</evidence>
<evidence type="ECO:0000269" key="8">
    <source ref="6"/>
</evidence>
<evidence type="ECO:0000303" key="9">
    <source>
    </source>
</evidence>
<evidence type="ECO:0000305" key="10"/>
<evidence type="ECO:0000305" key="11">
    <source>
    </source>
</evidence>
<evidence type="ECO:0007744" key="12">
    <source>
    </source>
</evidence>
<evidence type="ECO:0007744" key="13">
    <source>
    </source>
</evidence>
<evidence type="ECO:0007744" key="14">
    <source>
    </source>
</evidence>
<organism>
    <name type="scientific">Mus musculus</name>
    <name type="common">Mouse</name>
    <dbReference type="NCBI Taxonomy" id="10090"/>
    <lineage>
        <taxon>Eukaryota</taxon>
        <taxon>Metazoa</taxon>
        <taxon>Chordata</taxon>
        <taxon>Craniata</taxon>
        <taxon>Vertebrata</taxon>
        <taxon>Euteleostomi</taxon>
        <taxon>Mammalia</taxon>
        <taxon>Eutheria</taxon>
        <taxon>Euarchontoglires</taxon>
        <taxon>Glires</taxon>
        <taxon>Rodentia</taxon>
        <taxon>Myomorpha</taxon>
        <taxon>Muroidea</taxon>
        <taxon>Muridae</taxon>
        <taxon>Murinae</taxon>
        <taxon>Mus</taxon>
        <taxon>Mus</taxon>
    </lineage>
</organism>
<accession>O08709</accession>
<accession>Q91WT2</accession>
<accession>Q9QWP4</accession>
<accession>Q9QWW0</accession>
<sequence>MPGGLLLGDEAPNFEANTTIGRIRFHDFLGDSWGILFSHPRDFTPVCTTELGRAAKLAPEFAKRNVKLIALSIDSVEDHLAWSKDINAYNGETPTEKLPFPIIDDKGRDLAILLGMLDPVEKDDNNMPVTARVVFIFGPDKKLKLSILYPATTGRNFDEILRVVDSLQLTGTKPVATPVDWKKGESVMVVPTLSEEEAKQCFPKGVFTKELPSGKKYLRYTPQP</sequence>
<reference key="1">
    <citation type="journal article" date="1997" name="Genomics">
        <title>LTW4 protein on mouse chromosome 1 is a member of a family of antioxidant proteins.</title>
        <authorList>
            <person name="Iakoubova O.A."/>
            <person name="Pacella L.A."/>
            <person name="Her H."/>
            <person name="Beier D.R."/>
        </authorList>
    </citation>
    <scope>NUCLEOTIDE SEQUENCE [MRNA]</scope>
    <scope>PROTEIN SEQUENCE OF 2-26</scope>
    <source>
        <strain>C3H/FEJ</strain>
        <strain>C57BL/6J</strain>
        <strain>DBA/2J</strain>
        <tissue>Kidney</tissue>
        <tissue>Liver</tissue>
    </source>
</reference>
<reference key="2">
    <citation type="journal article" date="1997" name="Biochem. J.">
        <title>A novel type of glutathione peroxidase: expression and regulation during wound repair.</title>
        <authorList>
            <person name="Munz B."/>
            <person name="Frank S."/>
            <person name="Huebner G."/>
            <person name="Olsen E."/>
            <person name="Werner S."/>
        </authorList>
    </citation>
    <scope>NUCLEOTIDE SEQUENCE [MRNA]</scope>
    <source>
        <strain>BALB/cJ</strain>
        <tissue>Skin</tissue>
    </source>
</reference>
<reference key="3">
    <citation type="journal article" date="1999" name="Gene">
        <title>Characterization of the murine gene encoding 1-Cys peroxiredoxin and identification of highly homologous genes.</title>
        <authorList>
            <person name="Lee T.-H."/>
            <person name="Yu S.-L."/>
            <person name="Kim S.-U."/>
            <person name="Kim Y.-M."/>
            <person name="Choi I."/>
            <person name="Kang S.W."/>
            <person name="Rhee S.G."/>
            <person name="Yu D.-Y."/>
        </authorList>
    </citation>
    <scope>NUCLEOTIDE SEQUENCE [MRNA]</scope>
    <source>
        <strain>129/SvJ</strain>
        <strain>C57BL/6J</strain>
        <tissue>Brain</tissue>
    </source>
</reference>
<reference key="4">
    <citation type="journal article" date="2005" name="Science">
        <title>The transcriptional landscape of the mammalian genome.</title>
        <authorList>
            <person name="Carninci P."/>
            <person name="Kasukawa T."/>
            <person name="Katayama S."/>
            <person name="Gough J."/>
            <person name="Frith M.C."/>
            <person name="Maeda N."/>
            <person name="Oyama R."/>
            <person name="Ravasi T."/>
            <person name="Lenhard B."/>
            <person name="Wells C."/>
            <person name="Kodzius R."/>
            <person name="Shimokawa K."/>
            <person name="Bajic V.B."/>
            <person name="Brenner S.E."/>
            <person name="Batalov S."/>
            <person name="Forrest A.R."/>
            <person name="Zavolan M."/>
            <person name="Davis M.J."/>
            <person name="Wilming L.G."/>
            <person name="Aidinis V."/>
            <person name="Allen J.E."/>
            <person name="Ambesi-Impiombato A."/>
            <person name="Apweiler R."/>
            <person name="Aturaliya R.N."/>
            <person name="Bailey T.L."/>
            <person name="Bansal M."/>
            <person name="Baxter L."/>
            <person name="Beisel K.W."/>
            <person name="Bersano T."/>
            <person name="Bono H."/>
            <person name="Chalk A.M."/>
            <person name="Chiu K.P."/>
            <person name="Choudhary V."/>
            <person name="Christoffels A."/>
            <person name="Clutterbuck D.R."/>
            <person name="Crowe M.L."/>
            <person name="Dalla E."/>
            <person name="Dalrymple B.P."/>
            <person name="de Bono B."/>
            <person name="Della Gatta G."/>
            <person name="di Bernardo D."/>
            <person name="Down T."/>
            <person name="Engstrom P."/>
            <person name="Fagiolini M."/>
            <person name="Faulkner G."/>
            <person name="Fletcher C.F."/>
            <person name="Fukushima T."/>
            <person name="Furuno M."/>
            <person name="Futaki S."/>
            <person name="Gariboldi M."/>
            <person name="Georgii-Hemming P."/>
            <person name="Gingeras T.R."/>
            <person name="Gojobori T."/>
            <person name="Green R.E."/>
            <person name="Gustincich S."/>
            <person name="Harbers M."/>
            <person name="Hayashi Y."/>
            <person name="Hensch T.K."/>
            <person name="Hirokawa N."/>
            <person name="Hill D."/>
            <person name="Huminiecki L."/>
            <person name="Iacono M."/>
            <person name="Ikeo K."/>
            <person name="Iwama A."/>
            <person name="Ishikawa T."/>
            <person name="Jakt M."/>
            <person name="Kanapin A."/>
            <person name="Katoh M."/>
            <person name="Kawasawa Y."/>
            <person name="Kelso J."/>
            <person name="Kitamura H."/>
            <person name="Kitano H."/>
            <person name="Kollias G."/>
            <person name="Krishnan S.P."/>
            <person name="Kruger A."/>
            <person name="Kummerfeld S.K."/>
            <person name="Kurochkin I.V."/>
            <person name="Lareau L.F."/>
            <person name="Lazarevic D."/>
            <person name="Lipovich L."/>
            <person name="Liu J."/>
            <person name="Liuni S."/>
            <person name="McWilliam S."/>
            <person name="Madan Babu M."/>
            <person name="Madera M."/>
            <person name="Marchionni L."/>
            <person name="Matsuda H."/>
            <person name="Matsuzawa S."/>
            <person name="Miki H."/>
            <person name="Mignone F."/>
            <person name="Miyake S."/>
            <person name="Morris K."/>
            <person name="Mottagui-Tabar S."/>
            <person name="Mulder N."/>
            <person name="Nakano N."/>
            <person name="Nakauchi H."/>
            <person name="Ng P."/>
            <person name="Nilsson R."/>
            <person name="Nishiguchi S."/>
            <person name="Nishikawa S."/>
            <person name="Nori F."/>
            <person name="Ohara O."/>
            <person name="Okazaki Y."/>
            <person name="Orlando V."/>
            <person name="Pang K.C."/>
            <person name="Pavan W.J."/>
            <person name="Pavesi G."/>
            <person name="Pesole G."/>
            <person name="Petrovsky N."/>
            <person name="Piazza S."/>
            <person name="Reed J."/>
            <person name="Reid J.F."/>
            <person name="Ring B.Z."/>
            <person name="Ringwald M."/>
            <person name="Rost B."/>
            <person name="Ruan Y."/>
            <person name="Salzberg S.L."/>
            <person name="Sandelin A."/>
            <person name="Schneider C."/>
            <person name="Schoenbach C."/>
            <person name="Sekiguchi K."/>
            <person name="Semple C.A."/>
            <person name="Seno S."/>
            <person name="Sessa L."/>
            <person name="Sheng Y."/>
            <person name="Shibata Y."/>
            <person name="Shimada H."/>
            <person name="Shimada K."/>
            <person name="Silva D."/>
            <person name="Sinclair B."/>
            <person name="Sperling S."/>
            <person name="Stupka E."/>
            <person name="Sugiura K."/>
            <person name="Sultana R."/>
            <person name="Takenaka Y."/>
            <person name="Taki K."/>
            <person name="Tammoja K."/>
            <person name="Tan S.L."/>
            <person name="Tang S."/>
            <person name="Taylor M.S."/>
            <person name="Tegner J."/>
            <person name="Teichmann S.A."/>
            <person name="Ueda H.R."/>
            <person name="van Nimwegen E."/>
            <person name="Verardo R."/>
            <person name="Wei C.L."/>
            <person name="Yagi K."/>
            <person name="Yamanishi H."/>
            <person name="Zabarovsky E."/>
            <person name="Zhu S."/>
            <person name="Zimmer A."/>
            <person name="Hide W."/>
            <person name="Bult C."/>
            <person name="Grimmond S.M."/>
            <person name="Teasdale R.D."/>
            <person name="Liu E.T."/>
            <person name="Brusic V."/>
            <person name="Quackenbush J."/>
            <person name="Wahlestedt C."/>
            <person name="Mattick J.S."/>
            <person name="Hume D.A."/>
            <person name="Kai C."/>
            <person name="Sasaki D."/>
            <person name="Tomaru Y."/>
            <person name="Fukuda S."/>
            <person name="Kanamori-Katayama M."/>
            <person name="Suzuki M."/>
            <person name="Aoki J."/>
            <person name="Arakawa T."/>
            <person name="Iida J."/>
            <person name="Imamura K."/>
            <person name="Itoh M."/>
            <person name="Kato T."/>
            <person name="Kawaji H."/>
            <person name="Kawagashira N."/>
            <person name="Kawashima T."/>
            <person name="Kojima M."/>
            <person name="Kondo S."/>
            <person name="Konno H."/>
            <person name="Nakano K."/>
            <person name="Ninomiya N."/>
            <person name="Nishio T."/>
            <person name="Okada M."/>
            <person name="Plessy C."/>
            <person name="Shibata K."/>
            <person name="Shiraki T."/>
            <person name="Suzuki S."/>
            <person name="Tagami M."/>
            <person name="Waki K."/>
            <person name="Watahiki A."/>
            <person name="Okamura-Oho Y."/>
            <person name="Suzuki H."/>
            <person name="Kawai J."/>
            <person name="Hayashizaki Y."/>
        </authorList>
    </citation>
    <scope>NUCLEOTIDE SEQUENCE [LARGE SCALE MRNA]</scope>
    <source>
        <strain>C57BL/6J</strain>
        <tissue>Pituitary</tissue>
    </source>
</reference>
<reference key="5">
    <citation type="journal article" date="2004" name="Genome Res.">
        <title>The status, quality, and expansion of the NIH full-length cDNA project: the Mammalian Gene Collection (MGC).</title>
        <authorList>
            <consortium name="The MGC Project Team"/>
        </authorList>
    </citation>
    <scope>NUCLEOTIDE SEQUENCE [LARGE SCALE MRNA]</scope>
    <source>
        <strain>FVB/N</strain>
        <tissue>Colon</tissue>
    </source>
</reference>
<reference key="6">
    <citation type="submission" date="2007-04" db="UniProtKB">
        <authorList>
            <person name="Lubec G."/>
            <person name="Kang S.U."/>
            <person name="Klug S."/>
            <person name="Yang J.W."/>
            <person name="Zigmond M."/>
        </authorList>
    </citation>
    <scope>PROTEIN SEQUENCE OF 2-22; 25-53; 98-106; 109-122; 145-155 AND 163-182</scope>
    <scope>IDENTIFICATION BY MASS SPECTROMETRY</scope>
    <source>
        <strain>C57BL/6J</strain>
        <tissue>Brain</tissue>
        <tissue>Hippocampus</tissue>
    </source>
</reference>
<reference key="7">
    <citation type="journal article" date="2004" name="J. Biol. Chem.">
        <title>The serotonin 5-HT2A and 5-HT2C receptors interact with specific sets of PDZ proteins.</title>
        <authorList>
            <person name="Becamel C."/>
            <person name="Gavarini S."/>
            <person name="Chanrion B."/>
            <person name="Alonso G."/>
            <person name="Galeotti N."/>
            <person name="Dumuis A."/>
            <person name="Bockaert J."/>
            <person name="Marin P."/>
        </authorList>
    </citation>
    <scope>INTERACTION WITH HTR2A</scope>
</reference>
<reference key="8">
    <citation type="journal article" date="2008" name="J. Proteome Res.">
        <title>Large-scale identification and evolution indexing of tyrosine phosphorylation sites from murine brain.</title>
        <authorList>
            <person name="Ballif B.A."/>
            <person name="Carey G.R."/>
            <person name="Sunyaev S.R."/>
            <person name="Gygi S.P."/>
        </authorList>
    </citation>
    <scope>PHOSPHORYLATION [LARGE SCALE ANALYSIS] AT TYR-89</scope>
    <scope>IDENTIFICATION BY MASS SPECTROMETRY [LARGE SCALE ANALYSIS]</scope>
    <source>
        <tissue>Brain</tissue>
    </source>
</reference>
<reference key="9">
    <citation type="journal article" date="2010" name="Cell">
        <title>A tissue-specific atlas of mouse protein phosphorylation and expression.</title>
        <authorList>
            <person name="Huttlin E.L."/>
            <person name="Jedrychowski M.P."/>
            <person name="Elias J.E."/>
            <person name="Goswami T."/>
            <person name="Rad R."/>
            <person name="Beausoleil S.A."/>
            <person name="Villen J."/>
            <person name="Haas W."/>
            <person name="Sowa M.E."/>
            <person name="Gygi S.P."/>
        </authorList>
    </citation>
    <scope>PHOSPHORYLATION [LARGE SCALE ANALYSIS] AT THR-93</scope>
    <scope>VARIANT [LARGE SCALE ANALYSIS] ALA-124</scope>
    <scope>IDENTIFICATION BY MASS SPECTROMETRY [LARGE SCALE ANALYSIS]</scope>
    <source>
        <tissue>Brain</tissue>
        <tissue>Brown adipose tissue</tissue>
        <tissue>Heart</tissue>
        <tissue>Kidney</tissue>
        <tissue>Liver</tissue>
        <tissue>Lung</tissue>
        <tissue>Pancreas</tissue>
        <tissue>Spleen</tissue>
        <tissue>Testis</tissue>
    </source>
</reference>
<reference key="10">
    <citation type="journal article" date="2013" name="Mol. Cell">
        <title>SIRT5-mediated lysine desuccinylation impacts diverse metabolic pathways.</title>
        <authorList>
            <person name="Park J."/>
            <person name="Chen Y."/>
            <person name="Tishkoff D.X."/>
            <person name="Peng C."/>
            <person name="Tan M."/>
            <person name="Dai L."/>
            <person name="Xie Z."/>
            <person name="Zhang Y."/>
            <person name="Zwaans B.M."/>
            <person name="Skinner M.E."/>
            <person name="Lombard D.B."/>
            <person name="Zhao Y."/>
        </authorList>
    </citation>
    <scope>SUCCINYLATION [LARGE SCALE ANALYSIS] AT LYS-209</scope>
    <scope>IDENTIFICATION BY MASS SPECTROMETRY [LARGE SCALE ANALYSIS]</scope>
    <source>
        <tissue>Liver</tissue>
    </source>
</reference>
<reference key="11">
    <citation type="journal article" date="2016" name="J. Lipid Res.">
        <title>A novel lysophosphatidylcholine acyl transferase activity is expressed by peroxiredoxin 6.</title>
        <authorList>
            <person name="Fisher A.B."/>
            <person name="Dodia C."/>
            <person name="Sorokina E.M."/>
            <person name="Li H."/>
            <person name="Zhou S."/>
            <person name="Raabe T."/>
            <person name="Feinstein S.I."/>
        </authorList>
    </citation>
    <scope>FUNCTION</scope>
    <scope>CATALYTIC ACTIVITY</scope>
    <scope>ACTIVITY REGULATION</scope>
    <scope>MUTAGENESIS OF HIS-26; ASP-31; SER-32; CYS-47 AND ASP-140</scope>
</reference>
<comment type="function">
    <text evidence="3 6">Thiol-specific peroxidase that catalyzes the reduction of hydrogen peroxide and organic hydroperoxides to water and alcohols, respectively (By similarity). Can reduce H(2)O(2) and short chain organic, fatty acid, and phospholipid hydroperoxides (By similarity). Has phospholipase activity (PubMed:26830860). Can either reduce the oxidized sn-2 fatty acyl group of phospholipids (peroxidase activity) or hydrolyze the sn-2 ester bond of phospholipids (phospholipase activity) (By similarity). These activities are dependent on binding to phospholipids at acidic pH and to oxidized phospholipds at cytosolic pH (By similarity). Plays a role in cell protection against oxidative stress by detoxifying peroxides and in phospholipid homeostasis (By similarity). Exhibits acyl-CoA-dependent lysophospholipid acyltransferase which mediates the conversion of lysophosphatidylcholine (1-acyl-sn-glycero-3-phosphocholine or LPC) into phosphatidylcholine (1,2-diacyl-sn-glycero-3-phosphocholine or PC) (PubMed:26830860). Shows a clear preference for LPC as the lysophospholipid and for palmitoyl CoA as the fatty acyl substrate (By similarity).</text>
</comment>
<comment type="catalytic activity">
    <reaction evidence="3">
        <text>a hydroperoxide + 2 glutathione = an alcohol + glutathione disulfide + H2O</text>
        <dbReference type="Rhea" id="RHEA:62632"/>
        <dbReference type="ChEBI" id="CHEBI:15377"/>
        <dbReference type="ChEBI" id="CHEBI:30879"/>
        <dbReference type="ChEBI" id="CHEBI:35924"/>
        <dbReference type="ChEBI" id="CHEBI:57925"/>
        <dbReference type="ChEBI" id="CHEBI:58297"/>
        <dbReference type="EC" id="1.11.1.27"/>
    </reaction>
</comment>
<comment type="catalytic activity">
    <reaction evidence="6">
        <text>a 1,2-diacyl-sn-glycero-3-phosphocholine + H2O = a 1-acyl-sn-glycero-3-phosphocholine + a fatty acid + H(+)</text>
        <dbReference type="Rhea" id="RHEA:15801"/>
        <dbReference type="ChEBI" id="CHEBI:15377"/>
        <dbReference type="ChEBI" id="CHEBI:15378"/>
        <dbReference type="ChEBI" id="CHEBI:28868"/>
        <dbReference type="ChEBI" id="CHEBI:57643"/>
        <dbReference type="ChEBI" id="CHEBI:58168"/>
        <dbReference type="EC" id="3.1.1.4"/>
    </reaction>
</comment>
<comment type="catalytic activity">
    <reaction evidence="6">
        <text>a 1-acyl-sn-glycero-3-phosphocholine + an acyl-CoA = a 1,2-diacyl-sn-glycero-3-phosphocholine + CoA</text>
        <dbReference type="Rhea" id="RHEA:12937"/>
        <dbReference type="ChEBI" id="CHEBI:57287"/>
        <dbReference type="ChEBI" id="CHEBI:57643"/>
        <dbReference type="ChEBI" id="CHEBI:58168"/>
        <dbReference type="ChEBI" id="CHEBI:58342"/>
        <dbReference type="EC" id="2.3.1.23"/>
    </reaction>
</comment>
<comment type="catalytic activity">
    <reaction evidence="3">
        <text>1-hexadecanoyl-sn-glycero-3-phosphocholine + hexadecanoyl-CoA = 1,2-dihexadecanoyl-sn-glycero-3-phosphocholine + CoA</text>
        <dbReference type="Rhea" id="RHEA:35983"/>
        <dbReference type="ChEBI" id="CHEBI:57287"/>
        <dbReference type="ChEBI" id="CHEBI:57379"/>
        <dbReference type="ChEBI" id="CHEBI:72998"/>
        <dbReference type="ChEBI" id="CHEBI:72999"/>
    </reaction>
    <physiologicalReaction direction="left-to-right" evidence="3">
        <dbReference type="Rhea" id="RHEA:35984"/>
    </physiologicalReaction>
</comment>
<comment type="catalytic activity">
    <reaction evidence="3">
        <text>1,2-dihexadecanoyl-sn-glycero-3-phosphocholine + H2O = 1-hexadecanoyl-sn-glycero-3-phosphocholine + hexadecanoate + H(+)</text>
        <dbReference type="Rhea" id="RHEA:41223"/>
        <dbReference type="ChEBI" id="CHEBI:7896"/>
        <dbReference type="ChEBI" id="CHEBI:15377"/>
        <dbReference type="ChEBI" id="CHEBI:15378"/>
        <dbReference type="ChEBI" id="CHEBI:72998"/>
        <dbReference type="ChEBI" id="CHEBI:72999"/>
    </reaction>
    <physiologicalReaction direction="left-to-right" evidence="3">
        <dbReference type="Rhea" id="RHEA:41224"/>
    </physiologicalReaction>
</comment>
<comment type="activity regulation">
    <text evidence="6">MJ33 or lithium;[(2R)-1-hexadecoxy-3-(2,2,2-trifluoroethoxy)propan-2-yl] methyl phosphate inhibits its phospholipase A2 activity (PubMed:26830860). CI-976 or 2,2-Dimethyl-N-(2,4,6-trimethoxyphenyl)dodecanamide inhibits its lysophosphatidylcholine acyltransferase activity (PubMed:26830860).</text>
</comment>
<comment type="subunit">
    <text evidence="2 3 5">Homodimer (By similarity). Interacts with GSTP1; mediates PRDX6 glutathionylation and regeneration (By similarity). Interacts with APEX1. Interacts with STH. May interact with FAM168B (By similarity). May interact with HTR2A (PubMed:14988405).</text>
</comment>
<comment type="interaction">
    <interactant intactId="EBI-444895">
        <id>O08709</id>
    </interactant>
    <interactant intactId="EBI-9550667">
        <id>O70145</id>
        <label>Ncf2</label>
    </interactant>
    <organismsDiffer>false</organismsDiffer>
    <experiments>3</experiments>
</comment>
<comment type="subcellular location">
    <subcellularLocation>
        <location evidence="1">Cytoplasm</location>
    </subcellularLocation>
    <subcellularLocation>
        <location evidence="1">Lysosome</location>
    </subcellularLocation>
    <text evidence="1">Also found in lung secretory organelles (lamellar bodies).</text>
</comment>
<comment type="tissue specificity">
    <text>Highly expressed in heart, kidney and liver. Moderate expression in brain and stomach. Very low levels in intestine.</text>
</comment>
<comment type="PTM">
    <text evidence="3">Irreversibly inactivated by overoxidation of Cys-47 to sulfinic acid (Cys-SO(2)H) and sulfonic acid (Cys-SO(3)H) forms upon oxidative stress.</text>
</comment>
<comment type="PTM">
    <text evidence="1">Phosphorylation at Thr-177 by MAP kinases increases the phospholipase activity of the enzyme (By similarity). The phosphorylated form exhibits a greater lysophosphatidylcholine acyltransferase activity compared to the non-phosphorylated form (By similarity).</text>
</comment>
<comment type="miscellaneous">
    <text evidence="1">The active site is a conserved redox-active cysteine residue, the peroxidatic cysteine (C(P)), which makes the nucleophilic attack on the peroxide substrate. The peroxide oxidizes the C(P)-SH to cysteine sulfenic acid (C(P)-SOH), which then reacts with another cysteine residue, the resolving cysteine (C(R)), to form a disulfide bridge. The disulfide is subsequently reduced by an appropriate electron donor to complete the catalytic cycle. In this 1-Cys peroxiredoxin, no C(R) is present and C(P) instead forms a disulfide with a cysteine from another protein or with a small thiol molecule. C(P) is reactivated by glutathionylation mediated by glutathione S-transferase Pi, followed by spontaneous reduction of the enzyme with glutathione.</text>
</comment>
<comment type="similarity">
    <text evidence="10">Belongs to the peroxiredoxin family. Prx6 subfamily.</text>
</comment>
<feature type="initiator methionine" description="Removed" evidence="7 8">
    <location>
        <position position="1"/>
    </location>
</feature>
<feature type="chain" id="PRO_0000135103" description="Peroxiredoxin-6">
    <location>
        <begin position="2"/>
        <end position="224"/>
    </location>
</feature>
<feature type="domain" description="Thioredoxin" evidence="4">
    <location>
        <begin position="5"/>
        <end position="169"/>
    </location>
</feature>
<feature type="region of interest" description="Required and sufficient for targeting to lysosomes and lamellar bodies" evidence="1">
    <location>
        <begin position="31"/>
        <end position="40"/>
    </location>
</feature>
<feature type="active site" description="Cysteine sulfenic acid (-SOH) intermediate; for peroxidase activity" evidence="3">
    <location>
        <position position="47"/>
    </location>
</feature>
<feature type="active site" description="For phospholipase activity" evidence="11">
    <location>
        <position position="140"/>
    </location>
</feature>
<feature type="site" description="Important for phospholipase activity" evidence="11">
    <location>
        <position position="32"/>
    </location>
</feature>
<feature type="modified residue" description="Phosphothreonine" evidence="3">
    <location>
        <position position="44"/>
    </location>
</feature>
<feature type="modified residue" description="N6-acetyllysine" evidence="3">
    <location>
        <position position="63"/>
    </location>
</feature>
<feature type="modified residue" description="Phosphotyrosine" evidence="12">
    <location>
        <position position="89"/>
    </location>
</feature>
<feature type="modified residue" description="Phosphothreonine" evidence="13">
    <location>
        <position position="93"/>
    </location>
</feature>
<feature type="modified residue" description="Phosphothreonine; by MAPK" evidence="1">
    <location>
        <position position="177"/>
    </location>
</feature>
<feature type="modified residue" description="N6-acetyllysine; alternate" evidence="3">
    <location>
        <position position="209"/>
    </location>
</feature>
<feature type="modified residue" description="N6-succinyllysine; alternate" evidence="14">
    <location>
        <position position="209"/>
    </location>
</feature>
<feature type="sequence variant" description="In strain: C57BL/6, C57BL/6J and FVB/N." evidence="13">
    <original>D</original>
    <variation>A</variation>
    <location>
        <position position="124"/>
    </location>
</feature>
<feature type="mutagenesis site" description="Loss of phospholipase activity, but no effect on lysophosphatidylcholine acyltransferase activity." evidence="6">
    <original>H</original>
    <variation>A</variation>
    <location>
        <position position="26"/>
    </location>
</feature>
<feature type="mutagenesis site" description="Loss of lysophosphatidylcholine acyltransferase activity, but no effect on phospholipase activity." evidence="6">
    <original>D</original>
    <variation>A</variation>
    <location>
        <position position="31"/>
    </location>
</feature>
<feature type="mutagenesis site" description="Loss of phospholipase activity, but no effect on lysophosphatidylcholine acyltransferase activity." evidence="6">
    <original>S</original>
    <variation>A</variation>
    <location>
        <position position="32"/>
    </location>
</feature>
<feature type="mutagenesis site" description="No loss of phospholipase or lysophosphatidylcholine acyltransferase activity." evidence="6">
    <original>C</original>
    <variation>S</variation>
    <location>
        <position position="47"/>
    </location>
</feature>
<feature type="mutagenesis site" description="Loss of phospholipase activity, but no effect on lysophosphatidylcholine acyltransferase activity." evidence="6">
    <original>D</original>
    <variation>A</variation>
    <location>
        <position position="140"/>
    </location>
</feature>
<feature type="sequence conflict" description="In Ref. 3; AAC67553." evidence="10" ref="3">
    <original>G</original>
    <variation>S</variation>
    <location>
        <position position="154"/>
    </location>
</feature>
<feature type="sequence conflict" description="In Ref. 3; AAD03716." evidence="10" ref="3">
    <original>W</original>
    <variation>R</variation>
    <location>
        <position position="181"/>
    </location>
</feature>
<protein>
    <recommendedName>
        <fullName>Peroxiredoxin-6</fullName>
        <ecNumber evidence="3">1.11.1.27</ecNumber>
    </recommendedName>
    <alternativeName>
        <fullName>1-Cys peroxiredoxin</fullName>
        <shortName>1-Cys PRX</shortName>
    </alternativeName>
    <alternativeName>
        <fullName>Acidic calcium-independent phospholipase A2</fullName>
        <shortName>aiPLA2</shortName>
        <ecNumber evidence="6">3.1.1.4</ecNumber>
    </alternativeName>
    <alternativeName>
        <fullName>Antioxidant protein 2</fullName>
    </alternativeName>
    <alternativeName>
        <fullName evidence="10">Glutathione-dependent peroxiredoxin</fullName>
    </alternativeName>
    <alternativeName>
        <fullName evidence="9">Lysophosphatidylcholine acyltransferase 5</fullName>
        <shortName>LPC acyltransferase 5</shortName>
        <shortName>LPCAT-5</shortName>
        <shortName>Lyso-PC acyltransferase 5</shortName>
        <ecNumber evidence="6">2.3.1.23</ecNumber>
    </alternativeName>
    <alternativeName>
        <fullName>Non-selenium glutathione peroxidase</fullName>
        <shortName>NSGPx</shortName>
    </alternativeName>
</protein>